<sequence length="450" mass="48579">MKVIDQFKNKKVLVLGLAKSGESAARLLDKLGAIVTVNDGKPFEDNPAAQSLLEEGIKVITGGHPLELLDEEFALMVKNPGIPYNNPMIEKALAKRIPVLTEVELAYLISEAPIIGITGSNGKTTTTTMIGEVLTAAGQHGLLSGNIGYPASQVAQIASDKDTLVMELSSFQLMGVQEFHPEIAVITNLMPTHIDYHGSFSEYVAAKWNIQNKMTAADFLVLNFNQDLAKDLTSKTEATVVPFSTLEKVDGAYLEDGQLYFRGEVVMAANEIGVPGSHNVENALATIAVAKLRDVDNQTIKETLSAFGGVKHRLQFVDDIKGVKFYNDSKSTNILATQKALSGFDNSKVVLIAGGLDRGNEFDELVPDITGLKKMVILGQSAERVKRAADKAGVAYVEATDIADATRKAYELATQGDVVLLSPANASWDMYANFEVRGDLFIDTVAELKE</sequence>
<gene>
    <name evidence="1" type="primary">murD</name>
    <name type="ordered locus">SPD_0598</name>
</gene>
<keyword id="KW-0067">ATP-binding</keyword>
<keyword id="KW-0131">Cell cycle</keyword>
<keyword id="KW-0132">Cell division</keyword>
<keyword id="KW-0133">Cell shape</keyword>
<keyword id="KW-0961">Cell wall biogenesis/degradation</keyword>
<keyword id="KW-0963">Cytoplasm</keyword>
<keyword id="KW-0436">Ligase</keyword>
<keyword id="KW-0547">Nucleotide-binding</keyword>
<keyword id="KW-0573">Peptidoglycan synthesis</keyword>
<keyword id="KW-1185">Reference proteome</keyword>
<organism>
    <name type="scientific">Streptococcus pneumoniae serotype 2 (strain D39 / NCTC 7466)</name>
    <dbReference type="NCBI Taxonomy" id="373153"/>
    <lineage>
        <taxon>Bacteria</taxon>
        <taxon>Bacillati</taxon>
        <taxon>Bacillota</taxon>
        <taxon>Bacilli</taxon>
        <taxon>Lactobacillales</taxon>
        <taxon>Streptococcaceae</taxon>
        <taxon>Streptococcus</taxon>
    </lineage>
</organism>
<dbReference type="EC" id="6.3.2.9" evidence="1"/>
<dbReference type="EMBL" id="CP000410">
    <property type="protein sequence ID" value="ABJ54058.1"/>
    <property type="molecule type" value="Genomic_DNA"/>
</dbReference>
<dbReference type="RefSeq" id="WP_000863046.1">
    <property type="nucleotide sequence ID" value="NZ_JAMLJR010000001.1"/>
</dbReference>
<dbReference type="SMR" id="Q04LK1"/>
<dbReference type="PaxDb" id="373153-SPD_0598"/>
<dbReference type="KEGG" id="spd:SPD_0598"/>
<dbReference type="eggNOG" id="COG0771">
    <property type="taxonomic scope" value="Bacteria"/>
</dbReference>
<dbReference type="HOGENOM" id="CLU_032540_0_1_9"/>
<dbReference type="BioCyc" id="SPNE373153:G1G6V-663-MONOMER"/>
<dbReference type="UniPathway" id="UPA00219"/>
<dbReference type="Proteomes" id="UP000001452">
    <property type="component" value="Chromosome"/>
</dbReference>
<dbReference type="GO" id="GO:0005737">
    <property type="term" value="C:cytoplasm"/>
    <property type="evidence" value="ECO:0007669"/>
    <property type="project" value="UniProtKB-SubCell"/>
</dbReference>
<dbReference type="GO" id="GO:0005524">
    <property type="term" value="F:ATP binding"/>
    <property type="evidence" value="ECO:0007669"/>
    <property type="project" value="UniProtKB-UniRule"/>
</dbReference>
<dbReference type="GO" id="GO:0008764">
    <property type="term" value="F:UDP-N-acetylmuramoylalanine-D-glutamate ligase activity"/>
    <property type="evidence" value="ECO:0007669"/>
    <property type="project" value="UniProtKB-UniRule"/>
</dbReference>
<dbReference type="GO" id="GO:0051301">
    <property type="term" value="P:cell division"/>
    <property type="evidence" value="ECO:0007669"/>
    <property type="project" value="UniProtKB-KW"/>
</dbReference>
<dbReference type="GO" id="GO:0071555">
    <property type="term" value="P:cell wall organization"/>
    <property type="evidence" value="ECO:0007669"/>
    <property type="project" value="UniProtKB-KW"/>
</dbReference>
<dbReference type="GO" id="GO:0009252">
    <property type="term" value="P:peptidoglycan biosynthetic process"/>
    <property type="evidence" value="ECO:0007669"/>
    <property type="project" value="UniProtKB-UniRule"/>
</dbReference>
<dbReference type="GO" id="GO:0008360">
    <property type="term" value="P:regulation of cell shape"/>
    <property type="evidence" value="ECO:0007669"/>
    <property type="project" value="UniProtKB-KW"/>
</dbReference>
<dbReference type="Gene3D" id="3.90.190.20">
    <property type="entry name" value="Mur ligase, C-terminal domain"/>
    <property type="match status" value="1"/>
</dbReference>
<dbReference type="Gene3D" id="3.40.1190.10">
    <property type="entry name" value="Mur-like, catalytic domain"/>
    <property type="match status" value="1"/>
</dbReference>
<dbReference type="Gene3D" id="3.40.50.720">
    <property type="entry name" value="NAD(P)-binding Rossmann-like Domain"/>
    <property type="match status" value="1"/>
</dbReference>
<dbReference type="HAMAP" id="MF_00639">
    <property type="entry name" value="MurD"/>
    <property type="match status" value="1"/>
</dbReference>
<dbReference type="InterPro" id="IPR036565">
    <property type="entry name" value="Mur-like_cat_sf"/>
</dbReference>
<dbReference type="InterPro" id="IPR004101">
    <property type="entry name" value="Mur_ligase_C"/>
</dbReference>
<dbReference type="InterPro" id="IPR036615">
    <property type="entry name" value="Mur_ligase_C_dom_sf"/>
</dbReference>
<dbReference type="InterPro" id="IPR013221">
    <property type="entry name" value="Mur_ligase_cen"/>
</dbReference>
<dbReference type="InterPro" id="IPR005762">
    <property type="entry name" value="MurD"/>
</dbReference>
<dbReference type="NCBIfam" id="TIGR01087">
    <property type="entry name" value="murD"/>
    <property type="match status" value="1"/>
</dbReference>
<dbReference type="PANTHER" id="PTHR43692">
    <property type="entry name" value="UDP-N-ACETYLMURAMOYLALANINE--D-GLUTAMATE LIGASE"/>
    <property type="match status" value="1"/>
</dbReference>
<dbReference type="PANTHER" id="PTHR43692:SF1">
    <property type="entry name" value="UDP-N-ACETYLMURAMOYLALANINE--D-GLUTAMATE LIGASE"/>
    <property type="match status" value="1"/>
</dbReference>
<dbReference type="Pfam" id="PF02875">
    <property type="entry name" value="Mur_ligase_C"/>
    <property type="match status" value="1"/>
</dbReference>
<dbReference type="Pfam" id="PF08245">
    <property type="entry name" value="Mur_ligase_M"/>
    <property type="match status" value="1"/>
</dbReference>
<dbReference type="Pfam" id="PF21799">
    <property type="entry name" value="MurD-like_N"/>
    <property type="match status" value="1"/>
</dbReference>
<dbReference type="SUPFAM" id="SSF51984">
    <property type="entry name" value="MurCD N-terminal domain"/>
    <property type="match status" value="1"/>
</dbReference>
<dbReference type="SUPFAM" id="SSF53623">
    <property type="entry name" value="MurD-like peptide ligases, catalytic domain"/>
    <property type="match status" value="1"/>
</dbReference>
<dbReference type="SUPFAM" id="SSF53244">
    <property type="entry name" value="MurD-like peptide ligases, peptide-binding domain"/>
    <property type="match status" value="1"/>
</dbReference>
<proteinExistence type="inferred from homology"/>
<evidence type="ECO:0000255" key="1">
    <source>
        <dbReference type="HAMAP-Rule" id="MF_00639"/>
    </source>
</evidence>
<protein>
    <recommendedName>
        <fullName evidence="1">UDP-N-acetylmuramoylalanine--D-glutamate ligase</fullName>
        <ecNumber evidence="1">6.3.2.9</ecNumber>
    </recommendedName>
    <alternativeName>
        <fullName evidence="1">D-glutamic acid-adding enzyme</fullName>
    </alternativeName>
    <alternativeName>
        <fullName evidence="1">UDP-N-acetylmuramoyl-L-alanyl-D-glutamate synthetase</fullName>
    </alternativeName>
</protein>
<name>MURD_STRP2</name>
<comment type="function">
    <text evidence="1">Cell wall formation. Catalyzes the addition of glutamate to the nucleotide precursor UDP-N-acetylmuramoyl-L-alanine (UMA).</text>
</comment>
<comment type="catalytic activity">
    <reaction evidence="1">
        <text>UDP-N-acetyl-alpha-D-muramoyl-L-alanine + D-glutamate + ATP = UDP-N-acetyl-alpha-D-muramoyl-L-alanyl-D-glutamate + ADP + phosphate + H(+)</text>
        <dbReference type="Rhea" id="RHEA:16429"/>
        <dbReference type="ChEBI" id="CHEBI:15378"/>
        <dbReference type="ChEBI" id="CHEBI:29986"/>
        <dbReference type="ChEBI" id="CHEBI:30616"/>
        <dbReference type="ChEBI" id="CHEBI:43474"/>
        <dbReference type="ChEBI" id="CHEBI:83898"/>
        <dbReference type="ChEBI" id="CHEBI:83900"/>
        <dbReference type="ChEBI" id="CHEBI:456216"/>
        <dbReference type="EC" id="6.3.2.9"/>
    </reaction>
</comment>
<comment type="pathway">
    <text evidence="1">Cell wall biogenesis; peptidoglycan biosynthesis.</text>
</comment>
<comment type="subcellular location">
    <subcellularLocation>
        <location evidence="1">Cytoplasm</location>
    </subcellularLocation>
</comment>
<comment type="similarity">
    <text evidence="1">Belongs to the MurCDEF family.</text>
</comment>
<reference key="1">
    <citation type="journal article" date="2007" name="J. Bacteriol.">
        <title>Genome sequence of Avery's virulent serotype 2 strain D39 of Streptococcus pneumoniae and comparison with that of unencapsulated laboratory strain R6.</title>
        <authorList>
            <person name="Lanie J.A."/>
            <person name="Ng W.-L."/>
            <person name="Kazmierczak K.M."/>
            <person name="Andrzejewski T.M."/>
            <person name="Davidsen T.M."/>
            <person name="Wayne K.J."/>
            <person name="Tettelin H."/>
            <person name="Glass J.I."/>
            <person name="Winkler M.E."/>
        </authorList>
    </citation>
    <scope>NUCLEOTIDE SEQUENCE [LARGE SCALE GENOMIC DNA]</scope>
    <source>
        <strain>D39 / NCTC 7466</strain>
    </source>
</reference>
<feature type="chain" id="PRO_0000301450" description="UDP-N-acetylmuramoylalanine--D-glutamate ligase">
    <location>
        <begin position="1"/>
        <end position="450"/>
    </location>
</feature>
<feature type="binding site" evidence="1">
    <location>
        <begin position="119"/>
        <end position="125"/>
    </location>
    <ligand>
        <name>ATP</name>
        <dbReference type="ChEBI" id="CHEBI:30616"/>
    </ligand>
</feature>
<accession>Q04LK1</accession>